<organism>
    <name type="scientific">Kluyveromyces lactis (strain ATCC 8585 / CBS 2359 / DSM 70799 / NBRC 1267 / NRRL Y-1140 / WM37)</name>
    <name type="common">Yeast</name>
    <name type="synonym">Candida sphaerica</name>
    <dbReference type="NCBI Taxonomy" id="284590"/>
    <lineage>
        <taxon>Eukaryota</taxon>
        <taxon>Fungi</taxon>
        <taxon>Dikarya</taxon>
        <taxon>Ascomycota</taxon>
        <taxon>Saccharomycotina</taxon>
        <taxon>Saccharomycetes</taxon>
        <taxon>Saccharomycetales</taxon>
        <taxon>Saccharomycetaceae</taxon>
        <taxon>Kluyveromyces</taxon>
    </lineage>
</organism>
<keyword id="KW-0256">Endoplasmic reticulum</keyword>
<keyword id="KW-0325">Glycoprotein</keyword>
<keyword id="KW-0328">Glycosyltransferase</keyword>
<keyword id="KW-0472">Membrane</keyword>
<keyword id="KW-1185">Reference proteome</keyword>
<keyword id="KW-0808">Transferase</keyword>
<keyword id="KW-0812">Transmembrane</keyword>
<keyword id="KW-1133">Transmembrane helix</keyword>
<evidence type="ECO:0000250" key="1">
    <source>
        <dbReference type="UniProtKB" id="P43636"/>
    </source>
</evidence>
<evidence type="ECO:0000255" key="2"/>
<evidence type="ECO:0000305" key="3"/>
<name>ALG2_KLULA</name>
<feature type="chain" id="PRO_0000080266" description="Alpha-1,3/1,6-mannosyltransferase ALG2">
    <location>
        <begin position="1"/>
        <end position="503"/>
    </location>
</feature>
<feature type="transmembrane region" description="Helical" evidence="2">
    <location>
        <begin position="444"/>
        <end position="466"/>
    </location>
</feature>
<feature type="transmembrane region" description="Helical" evidence="2">
    <location>
        <begin position="473"/>
        <end position="495"/>
    </location>
</feature>
<feature type="glycosylation site" description="N-linked (GlcNAc...) asparagine" evidence="2">
    <location>
        <position position="59"/>
    </location>
</feature>
<feature type="glycosylation site" description="N-linked (GlcNAc...) asparagine" evidence="2">
    <location>
        <position position="173"/>
    </location>
</feature>
<feature type="glycosylation site" description="N-linked (GlcNAc...) asparagine" evidence="2">
    <location>
        <position position="262"/>
    </location>
</feature>
<feature type="glycosylation site" description="N-linked (GlcNAc...) asparagine" evidence="2">
    <location>
        <position position="403"/>
    </location>
</feature>
<feature type="glycosylation site" description="N-linked (GlcNAc...) asparagine" evidence="2">
    <location>
        <position position="500"/>
    </location>
</feature>
<protein>
    <recommendedName>
        <fullName>Alpha-1,3/1,6-mannosyltransferase ALG2</fullName>
        <ecNumber evidence="1">2.4.1.132</ecNumber>
        <ecNumber evidence="1">2.4.1.257</ecNumber>
    </recommendedName>
    <alternativeName>
        <fullName>Asparagine-linked glycosylation protein 2</fullName>
    </alternativeName>
    <alternativeName>
        <fullName>GDP-Man:Man(1)GlcNAc(2)-PP-Dol alpha-1,3-mannosyltransferase</fullName>
    </alternativeName>
    <alternativeName>
        <fullName>GDP-Man:Man(1)GlcNAc(2)-PP-dolichol mannosyltransferase</fullName>
    </alternativeName>
    <alternativeName>
        <fullName>GDP-Man:Man(2)GlcNAc(2)-PP-Dol alpha-1,6-mannosyltransferase</fullName>
    </alternativeName>
</protein>
<dbReference type="EC" id="2.4.1.132" evidence="1"/>
<dbReference type="EC" id="2.4.1.257" evidence="1"/>
<dbReference type="EMBL" id="CR382122">
    <property type="protein sequence ID" value="CAH02032.1"/>
    <property type="molecule type" value="Genomic_DNA"/>
</dbReference>
<dbReference type="RefSeq" id="XP_451639.1">
    <property type="nucleotide sequence ID" value="XM_451639.1"/>
</dbReference>
<dbReference type="SMR" id="Q6CWQ0"/>
<dbReference type="FunCoup" id="Q6CWQ0">
    <property type="interactions" value="758"/>
</dbReference>
<dbReference type="STRING" id="284590.Q6CWQ0"/>
<dbReference type="CAZy" id="GT4">
    <property type="family name" value="Glycosyltransferase Family 4"/>
</dbReference>
<dbReference type="GlyCosmos" id="Q6CWQ0">
    <property type="glycosylation" value="5 sites, No reported glycans"/>
</dbReference>
<dbReference type="PaxDb" id="284590-Q6CWQ0"/>
<dbReference type="KEGG" id="kla:KLLA0_B02420g"/>
<dbReference type="eggNOG" id="KOG0853">
    <property type="taxonomic scope" value="Eukaryota"/>
</dbReference>
<dbReference type="HOGENOM" id="CLU_030619_0_0_1"/>
<dbReference type="InParanoid" id="Q6CWQ0"/>
<dbReference type="OMA" id="AMYMKCP"/>
<dbReference type="UniPathway" id="UPA00378"/>
<dbReference type="Proteomes" id="UP000000598">
    <property type="component" value="Chromosome B"/>
</dbReference>
<dbReference type="GO" id="GO:0005789">
    <property type="term" value="C:endoplasmic reticulum membrane"/>
    <property type="evidence" value="ECO:0007669"/>
    <property type="project" value="UniProtKB-SubCell"/>
</dbReference>
<dbReference type="GO" id="GO:0004378">
    <property type="term" value="F:GDP-Man:Man1GlcNAc2-PP-Dol alpha-1,3-mannosyltransferase activity"/>
    <property type="evidence" value="ECO:0007669"/>
    <property type="project" value="UniProtKB-EC"/>
</dbReference>
<dbReference type="GO" id="GO:0102704">
    <property type="term" value="F:GDP-Man:Man2GlcNAc2-PP-dolichol alpha-1,6-mannosyltransferase activity"/>
    <property type="evidence" value="ECO:0007669"/>
    <property type="project" value="UniProtKB-EC"/>
</dbReference>
<dbReference type="GO" id="GO:0006486">
    <property type="term" value="P:protein glycosylation"/>
    <property type="evidence" value="ECO:0007669"/>
    <property type="project" value="UniProtKB-UniPathway"/>
</dbReference>
<dbReference type="CDD" id="cd03805">
    <property type="entry name" value="GT4_ALG2-like"/>
    <property type="match status" value="1"/>
</dbReference>
<dbReference type="FunFam" id="3.40.50.2000:FF:000222">
    <property type="entry name" value="Alpha-1,3-mannosyltransferase ALG2"/>
    <property type="match status" value="1"/>
</dbReference>
<dbReference type="Gene3D" id="3.40.50.2000">
    <property type="entry name" value="Glycogen Phosphorylase B"/>
    <property type="match status" value="2"/>
</dbReference>
<dbReference type="InterPro" id="IPR027054">
    <property type="entry name" value="ALG2"/>
</dbReference>
<dbReference type="InterPro" id="IPR001296">
    <property type="entry name" value="Glyco_trans_1"/>
</dbReference>
<dbReference type="InterPro" id="IPR028098">
    <property type="entry name" value="Glyco_trans_4-like_N"/>
</dbReference>
<dbReference type="PANTHER" id="PTHR45918">
    <property type="entry name" value="ALPHA-1,3/1,6-MANNOSYLTRANSFERASE ALG2"/>
    <property type="match status" value="1"/>
</dbReference>
<dbReference type="PANTHER" id="PTHR45918:SF1">
    <property type="entry name" value="ALPHA-1,3_1,6-MANNOSYLTRANSFERASE ALG2"/>
    <property type="match status" value="1"/>
</dbReference>
<dbReference type="Pfam" id="PF13439">
    <property type="entry name" value="Glyco_transf_4"/>
    <property type="match status" value="1"/>
</dbReference>
<dbReference type="Pfam" id="PF00534">
    <property type="entry name" value="Glycos_transf_1"/>
    <property type="match status" value="2"/>
</dbReference>
<dbReference type="SUPFAM" id="SSF53756">
    <property type="entry name" value="UDP-Glycosyltransferase/glycogen phosphorylase"/>
    <property type="match status" value="1"/>
</dbReference>
<sequence>MSEAPVHQRKVAFIHPDLGIGGAERLVVDAAAGLQNAGYDVTIYTSHCDKSHCFEEVKNGTLKVEVRGDALPTHIFGKFSILCANLRQLYLTWNLISTGKIEEYDVYIVDQLSSCVPLLHLNAPDSKVLFYCHFPDQLLARRDGLLKKLYRIPFDILEQFTMGVADTILVNSNFTKQVFAKTFQSLAVDPKVVYPCVNVEQEEILPLDKDLMKKILKNNEKYYLSINRYERKKNIELAITAFAQSKQRTSHKLFISGGYDLNNSENIDYLKELETLATELKLKHVHLSYPEYSKSPDKCPSSNFADAQILFLTSVSSSLKELLLQSTEMLLYTPSNEHFGIVPLEAMKYGVPVLAVDTGGPLETVVDYNETPSHIDATGWLRPSDADEWSKVLDQSVDIFEKNHSLFEVNGPKRIKYYFSREAMSKNFDNTIDHIIWKSRGTRLWSTLAPGLLMFTVQYATLLITGDASWPYLLLAAISYFVLRSVKATVYWIIVFCYLNYST</sequence>
<accession>Q6CWQ0</accession>
<comment type="function">
    <text evidence="1">Mannosylates Man(2)GlcNAc(2)-dolichol diphosphate and Man(1)GlcNAc(2)-dolichol diphosphate to form Man(3)GlcNAc(2)-dolichol diphosphate.</text>
</comment>
<comment type="catalytic activity">
    <reaction evidence="1">
        <text>a beta-D-Man-(1-&gt;4)-beta-D-GlcNAc-(1-&gt;4)-alpha-D-GlcNAc-diphospho-di-trans,poly-cis-dolichol + GDP-alpha-D-mannose = an alpha-D-Man-(1-&gt;3)-beta-D-Man-(1-&gt;4)-beta-D-GlcNAc-(1-&gt;4)-alpha-D-GlcNAc-diphospho-di-trans,poly-cis-dolichol + GDP + H(+)</text>
        <dbReference type="Rhea" id="RHEA:29515"/>
        <dbReference type="Rhea" id="RHEA-COMP:19511"/>
        <dbReference type="Rhea" id="RHEA-COMP:19513"/>
        <dbReference type="ChEBI" id="CHEBI:15378"/>
        <dbReference type="ChEBI" id="CHEBI:57527"/>
        <dbReference type="ChEBI" id="CHEBI:58189"/>
        <dbReference type="ChEBI" id="CHEBI:58472"/>
        <dbReference type="ChEBI" id="CHEBI:132510"/>
        <dbReference type="EC" id="2.4.1.132"/>
    </reaction>
    <physiologicalReaction direction="left-to-right" evidence="1">
        <dbReference type="Rhea" id="RHEA:29516"/>
    </physiologicalReaction>
</comment>
<comment type="catalytic activity">
    <reaction evidence="1">
        <text>an alpha-D-Man-(1-&gt;3)-beta-D-Man-(1-&gt;4)-beta-D-GlcNAc-(1-&gt;4)-alpha-D-GlcNAc-diphospho-di-trans,poly-cis-dolichol + GDP-alpha-D-mannose = an alpha-D-Man-(1-&gt;3)-[alpha-D-Man-(1-&gt;6)]-beta-D-Man-(1-&gt;4)-beta-D-GlcNAc-(1-&gt;4)-alpha-D-GlcNAc-diphospho-di-trans,poly-cis-dolichol + GDP + H(+)</text>
        <dbReference type="Rhea" id="RHEA:29519"/>
        <dbReference type="Rhea" id="RHEA-COMP:19513"/>
        <dbReference type="Rhea" id="RHEA-COMP:19515"/>
        <dbReference type="ChEBI" id="CHEBI:15378"/>
        <dbReference type="ChEBI" id="CHEBI:57527"/>
        <dbReference type="ChEBI" id="CHEBI:58189"/>
        <dbReference type="ChEBI" id="CHEBI:132510"/>
        <dbReference type="ChEBI" id="CHEBI:132511"/>
        <dbReference type="EC" id="2.4.1.257"/>
    </reaction>
    <physiologicalReaction direction="left-to-right" evidence="1">
        <dbReference type="Rhea" id="RHEA:29520"/>
    </physiologicalReaction>
</comment>
<comment type="pathway">
    <text evidence="1">Protein modification; protein glycosylation.</text>
</comment>
<comment type="subcellular location">
    <subcellularLocation>
        <location evidence="1">Endoplasmic reticulum membrane</location>
        <topology evidence="2">Multi-pass membrane protein</topology>
    </subcellularLocation>
</comment>
<comment type="similarity">
    <text evidence="3">Belongs to the glycosyltransferase group 1 family.</text>
</comment>
<reference key="1">
    <citation type="journal article" date="2004" name="Nature">
        <title>Genome evolution in yeasts.</title>
        <authorList>
            <person name="Dujon B."/>
            <person name="Sherman D."/>
            <person name="Fischer G."/>
            <person name="Durrens P."/>
            <person name="Casaregola S."/>
            <person name="Lafontaine I."/>
            <person name="de Montigny J."/>
            <person name="Marck C."/>
            <person name="Neuveglise C."/>
            <person name="Talla E."/>
            <person name="Goffard N."/>
            <person name="Frangeul L."/>
            <person name="Aigle M."/>
            <person name="Anthouard V."/>
            <person name="Babour A."/>
            <person name="Barbe V."/>
            <person name="Barnay S."/>
            <person name="Blanchin S."/>
            <person name="Beckerich J.-M."/>
            <person name="Beyne E."/>
            <person name="Bleykasten C."/>
            <person name="Boisrame A."/>
            <person name="Boyer J."/>
            <person name="Cattolico L."/>
            <person name="Confanioleri F."/>
            <person name="de Daruvar A."/>
            <person name="Despons L."/>
            <person name="Fabre E."/>
            <person name="Fairhead C."/>
            <person name="Ferry-Dumazet H."/>
            <person name="Groppi A."/>
            <person name="Hantraye F."/>
            <person name="Hennequin C."/>
            <person name="Jauniaux N."/>
            <person name="Joyet P."/>
            <person name="Kachouri R."/>
            <person name="Kerrest A."/>
            <person name="Koszul R."/>
            <person name="Lemaire M."/>
            <person name="Lesur I."/>
            <person name="Ma L."/>
            <person name="Muller H."/>
            <person name="Nicaud J.-M."/>
            <person name="Nikolski M."/>
            <person name="Oztas S."/>
            <person name="Ozier-Kalogeropoulos O."/>
            <person name="Pellenz S."/>
            <person name="Potier S."/>
            <person name="Richard G.-F."/>
            <person name="Straub M.-L."/>
            <person name="Suleau A."/>
            <person name="Swennen D."/>
            <person name="Tekaia F."/>
            <person name="Wesolowski-Louvel M."/>
            <person name="Westhof E."/>
            <person name="Wirth B."/>
            <person name="Zeniou-Meyer M."/>
            <person name="Zivanovic Y."/>
            <person name="Bolotin-Fukuhara M."/>
            <person name="Thierry A."/>
            <person name="Bouchier C."/>
            <person name="Caudron B."/>
            <person name="Scarpelli C."/>
            <person name="Gaillardin C."/>
            <person name="Weissenbach J."/>
            <person name="Wincker P."/>
            <person name="Souciet J.-L."/>
        </authorList>
    </citation>
    <scope>NUCLEOTIDE SEQUENCE [LARGE SCALE GENOMIC DNA]</scope>
    <source>
        <strain>ATCC 8585 / CBS 2359 / DSM 70799 / NBRC 1267 / NRRL Y-1140 / WM37</strain>
    </source>
</reference>
<proteinExistence type="inferred from homology"/>
<gene>
    <name type="primary">ALG2</name>
    <name type="ordered locus">KLLA0B02420g</name>
</gene>